<protein>
    <recommendedName>
        <fullName evidence="1">Imidazoleglycerol-phosphate dehydratase</fullName>
        <shortName evidence="1">IGPD</shortName>
        <ecNumber evidence="1">4.2.1.19</ecNumber>
    </recommendedName>
</protein>
<comment type="catalytic activity">
    <reaction evidence="1">
        <text>D-erythro-1-(imidazol-4-yl)glycerol 3-phosphate = 3-(imidazol-4-yl)-2-oxopropyl phosphate + H2O</text>
        <dbReference type="Rhea" id="RHEA:11040"/>
        <dbReference type="ChEBI" id="CHEBI:15377"/>
        <dbReference type="ChEBI" id="CHEBI:57766"/>
        <dbReference type="ChEBI" id="CHEBI:58278"/>
        <dbReference type="EC" id="4.2.1.19"/>
    </reaction>
</comment>
<comment type="pathway">
    <text evidence="1">Amino-acid biosynthesis; L-histidine biosynthesis; L-histidine from 5-phospho-alpha-D-ribose 1-diphosphate: step 6/9.</text>
</comment>
<comment type="subcellular location">
    <subcellularLocation>
        <location evidence="1">Cytoplasm</location>
    </subcellularLocation>
</comment>
<comment type="similarity">
    <text evidence="1">Belongs to the imidazoleglycerol-phosphate dehydratase family.</text>
</comment>
<dbReference type="EC" id="4.2.1.19" evidence="1"/>
<dbReference type="EMBL" id="AE016823">
    <property type="protein sequence ID" value="AAS68745.1"/>
    <property type="molecule type" value="Genomic_DNA"/>
</dbReference>
<dbReference type="RefSeq" id="WP_000130165.1">
    <property type="nucleotide sequence ID" value="NC_005823.1"/>
</dbReference>
<dbReference type="SMR" id="P61660"/>
<dbReference type="GeneID" id="61143467"/>
<dbReference type="KEGG" id="lic:LIC_10112"/>
<dbReference type="HOGENOM" id="CLU_044308_3_0_12"/>
<dbReference type="UniPathway" id="UPA00031">
    <property type="reaction ID" value="UER00011"/>
</dbReference>
<dbReference type="Proteomes" id="UP000007037">
    <property type="component" value="Chromosome I"/>
</dbReference>
<dbReference type="GO" id="GO:0005737">
    <property type="term" value="C:cytoplasm"/>
    <property type="evidence" value="ECO:0007669"/>
    <property type="project" value="UniProtKB-SubCell"/>
</dbReference>
<dbReference type="GO" id="GO:0004424">
    <property type="term" value="F:imidazoleglycerol-phosphate dehydratase activity"/>
    <property type="evidence" value="ECO:0007669"/>
    <property type="project" value="UniProtKB-UniRule"/>
</dbReference>
<dbReference type="GO" id="GO:0000105">
    <property type="term" value="P:L-histidine biosynthetic process"/>
    <property type="evidence" value="ECO:0007669"/>
    <property type="project" value="UniProtKB-UniRule"/>
</dbReference>
<dbReference type="CDD" id="cd07914">
    <property type="entry name" value="IGPD"/>
    <property type="match status" value="1"/>
</dbReference>
<dbReference type="FunFam" id="3.30.230.40:FF:000001">
    <property type="entry name" value="Imidazoleglycerol-phosphate dehydratase HisB"/>
    <property type="match status" value="1"/>
</dbReference>
<dbReference type="FunFam" id="3.30.230.40:FF:000003">
    <property type="entry name" value="Imidazoleglycerol-phosphate dehydratase HisB"/>
    <property type="match status" value="1"/>
</dbReference>
<dbReference type="Gene3D" id="3.30.230.40">
    <property type="entry name" value="Imidazole glycerol phosphate dehydratase, domain 1"/>
    <property type="match status" value="2"/>
</dbReference>
<dbReference type="HAMAP" id="MF_00076">
    <property type="entry name" value="HisB"/>
    <property type="match status" value="1"/>
</dbReference>
<dbReference type="InterPro" id="IPR038494">
    <property type="entry name" value="IGPD_sf"/>
</dbReference>
<dbReference type="InterPro" id="IPR000807">
    <property type="entry name" value="ImidazoleglycerolP_deHydtase"/>
</dbReference>
<dbReference type="InterPro" id="IPR020565">
    <property type="entry name" value="ImidazoleglycerP_deHydtase_CS"/>
</dbReference>
<dbReference type="InterPro" id="IPR020568">
    <property type="entry name" value="Ribosomal_Su5_D2-typ_SF"/>
</dbReference>
<dbReference type="NCBIfam" id="NF002114">
    <property type="entry name" value="PRK00951.2-4"/>
    <property type="match status" value="1"/>
</dbReference>
<dbReference type="PANTHER" id="PTHR23133:SF2">
    <property type="entry name" value="IMIDAZOLEGLYCEROL-PHOSPHATE DEHYDRATASE"/>
    <property type="match status" value="1"/>
</dbReference>
<dbReference type="PANTHER" id="PTHR23133">
    <property type="entry name" value="IMIDAZOLEGLYCEROL-PHOSPHATE DEHYDRATASE HIS7"/>
    <property type="match status" value="1"/>
</dbReference>
<dbReference type="Pfam" id="PF00475">
    <property type="entry name" value="IGPD"/>
    <property type="match status" value="1"/>
</dbReference>
<dbReference type="SUPFAM" id="SSF54211">
    <property type="entry name" value="Ribosomal protein S5 domain 2-like"/>
    <property type="match status" value="2"/>
</dbReference>
<dbReference type="PROSITE" id="PS00954">
    <property type="entry name" value="IGP_DEHYDRATASE_1"/>
    <property type="match status" value="1"/>
</dbReference>
<dbReference type="PROSITE" id="PS00955">
    <property type="entry name" value="IGP_DEHYDRATASE_2"/>
    <property type="match status" value="1"/>
</dbReference>
<name>HIS7_LEPIC</name>
<accession>P61660</accession>
<proteinExistence type="inferred from homology"/>
<feature type="chain" id="PRO_0000158137" description="Imidazoleglycerol-phosphate dehydratase">
    <location>
        <begin position="1"/>
        <end position="206"/>
    </location>
</feature>
<organism>
    <name type="scientific">Leptospira interrogans serogroup Icterohaemorrhagiae serovar copenhageni (strain Fiocruz L1-130)</name>
    <dbReference type="NCBI Taxonomy" id="267671"/>
    <lineage>
        <taxon>Bacteria</taxon>
        <taxon>Pseudomonadati</taxon>
        <taxon>Spirochaetota</taxon>
        <taxon>Spirochaetia</taxon>
        <taxon>Leptospirales</taxon>
        <taxon>Leptospiraceae</taxon>
        <taxon>Leptospira</taxon>
    </lineage>
</organism>
<sequence>MTDKLIGFYDPVRMKAERKTSETEIKLEMNLRGTGQYQFDTEIPFFEHMLSHISKHGLIDLNLWLRGDIEIDCHHSVEDTAILMGTTIHKQLGDKAGIFRYGHFTLTMDEVLTTVAVDLGGRYFFKYTGPELTGKFGIYDAELSLEFLQKLALNAKMNLHVVVHYGDNKHHVHESIFKALGKALRMAIAQDSAAAGAIPSTKGVLE</sequence>
<keyword id="KW-0028">Amino-acid biosynthesis</keyword>
<keyword id="KW-0963">Cytoplasm</keyword>
<keyword id="KW-0368">Histidine biosynthesis</keyword>
<keyword id="KW-0456">Lyase</keyword>
<reference key="1">
    <citation type="journal article" date="2004" name="J. Bacteriol.">
        <title>Comparative genomics of two Leptospira interrogans serovars reveals novel insights into physiology and pathogenesis.</title>
        <authorList>
            <person name="Nascimento A.L.T.O."/>
            <person name="Ko A.I."/>
            <person name="Martins E.A.L."/>
            <person name="Monteiro-Vitorello C.B."/>
            <person name="Ho P.L."/>
            <person name="Haake D.A."/>
            <person name="Verjovski-Almeida S."/>
            <person name="Hartskeerl R.A."/>
            <person name="Marques M.V."/>
            <person name="Oliveira M.C."/>
            <person name="Menck C.F.M."/>
            <person name="Leite L.C.C."/>
            <person name="Carrer H."/>
            <person name="Coutinho L.L."/>
            <person name="Degrave W.M."/>
            <person name="Dellagostin O.A."/>
            <person name="El-Dorry H."/>
            <person name="Ferro E.S."/>
            <person name="Ferro M.I.T."/>
            <person name="Furlan L.R."/>
            <person name="Gamberini M."/>
            <person name="Giglioti E.A."/>
            <person name="Goes-Neto A."/>
            <person name="Goldman G.H."/>
            <person name="Goldman M.H.S."/>
            <person name="Harakava R."/>
            <person name="Jeronimo S.M.B."/>
            <person name="Junqueira-de-Azevedo I.L.M."/>
            <person name="Kimura E.T."/>
            <person name="Kuramae E.E."/>
            <person name="Lemos E.G.M."/>
            <person name="Lemos M.V.F."/>
            <person name="Marino C.L."/>
            <person name="Nunes L.R."/>
            <person name="de Oliveira R.C."/>
            <person name="Pereira G.G."/>
            <person name="Reis M.S."/>
            <person name="Schriefer A."/>
            <person name="Siqueira W.J."/>
            <person name="Sommer P."/>
            <person name="Tsai S.M."/>
            <person name="Simpson A.J.G."/>
            <person name="Ferro J.A."/>
            <person name="Camargo L.E.A."/>
            <person name="Kitajima J.P."/>
            <person name="Setubal J.C."/>
            <person name="Van Sluys M.A."/>
        </authorList>
    </citation>
    <scope>NUCLEOTIDE SEQUENCE [LARGE SCALE GENOMIC DNA]</scope>
    <source>
        <strain>Fiocruz L1-130</strain>
    </source>
</reference>
<evidence type="ECO:0000255" key="1">
    <source>
        <dbReference type="HAMAP-Rule" id="MF_00076"/>
    </source>
</evidence>
<gene>
    <name evidence="1" type="primary">hisB</name>
    <name type="ordered locus">LIC_10112</name>
</gene>